<protein>
    <recommendedName>
        <fullName evidence="6">Chitin synthase regulator SKT5</fullName>
    </recommendedName>
</protein>
<reference key="1">
    <citation type="journal article" date="1993" name="Yeast">
        <title>Sequencing and functional analysis of a 32,560 bp segment on the left arm of yeast chromosome II. Identification of 26 open reading frames, including the KIP1 and SEC17 genes.</title>
        <authorList>
            <person name="Scherens B."/>
            <person name="el Bakkoury M."/>
            <person name="Vierendeels F."/>
            <person name="Dubois E."/>
            <person name="Messenguy F."/>
        </authorList>
    </citation>
    <scope>NUCLEOTIDE SEQUENCE [GENOMIC DNA]</scope>
    <source>
        <strain>ATCC 204508 / S288c</strain>
    </source>
</reference>
<reference key="2">
    <citation type="journal article" date="1994" name="EMBO J.">
        <title>Complete DNA sequence of yeast chromosome II.</title>
        <authorList>
            <person name="Feldmann H."/>
            <person name="Aigle M."/>
            <person name="Aljinovic G."/>
            <person name="Andre B."/>
            <person name="Baclet M.C."/>
            <person name="Barthe C."/>
            <person name="Baur A."/>
            <person name="Becam A.-M."/>
            <person name="Biteau N."/>
            <person name="Boles E."/>
            <person name="Brandt T."/>
            <person name="Brendel M."/>
            <person name="Brueckner M."/>
            <person name="Bussereau F."/>
            <person name="Christiansen C."/>
            <person name="Contreras R."/>
            <person name="Crouzet M."/>
            <person name="Cziepluch C."/>
            <person name="Demolis N."/>
            <person name="Delaveau T."/>
            <person name="Doignon F."/>
            <person name="Domdey H."/>
            <person name="Duesterhus S."/>
            <person name="Dubois E."/>
            <person name="Dujon B."/>
            <person name="El Bakkoury M."/>
            <person name="Entian K.-D."/>
            <person name="Feuermann M."/>
            <person name="Fiers W."/>
            <person name="Fobo G.M."/>
            <person name="Fritz C."/>
            <person name="Gassenhuber J."/>
            <person name="Glansdorff N."/>
            <person name="Goffeau A."/>
            <person name="Grivell L.A."/>
            <person name="de Haan M."/>
            <person name="Hein C."/>
            <person name="Herbert C.J."/>
            <person name="Hollenberg C.P."/>
            <person name="Holmstroem K."/>
            <person name="Jacq C."/>
            <person name="Jacquet M."/>
            <person name="Jauniaux J.-C."/>
            <person name="Jonniaux J.-L."/>
            <person name="Kallesoee T."/>
            <person name="Kiesau P."/>
            <person name="Kirchrath L."/>
            <person name="Koetter P."/>
            <person name="Korol S."/>
            <person name="Liebl S."/>
            <person name="Logghe M."/>
            <person name="Lohan A.J.E."/>
            <person name="Louis E.J."/>
            <person name="Li Z.Y."/>
            <person name="Maat M.J."/>
            <person name="Mallet L."/>
            <person name="Mannhaupt G."/>
            <person name="Messenguy F."/>
            <person name="Miosga T."/>
            <person name="Molemans F."/>
            <person name="Mueller S."/>
            <person name="Nasr F."/>
            <person name="Obermaier B."/>
            <person name="Perea J."/>
            <person name="Pierard A."/>
            <person name="Piravandi E."/>
            <person name="Pohl F.M."/>
            <person name="Pohl T.M."/>
            <person name="Potier S."/>
            <person name="Proft M."/>
            <person name="Purnelle B."/>
            <person name="Ramezani Rad M."/>
            <person name="Rieger M."/>
            <person name="Rose M."/>
            <person name="Schaaff-Gerstenschlaeger I."/>
            <person name="Scherens B."/>
            <person name="Schwarzlose C."/>
            <person name="Skala J."/>
            <person name="Slonimski P.P."/>
            <person name="Smits P.H.M."/>
            <person name="Souciet J.-L."/>
            <person name="Steensma H.Y."/>
            <person name="Stucka R."/>
            <person name="Urrestarazu L.A."/>
            <person name="van der Aart Q.J.M."/>
            <person name="Van Dyck L."/>
            <person name="Vassarotti A."/>
            <person name="Vetter I."/>
            <person name="Vierendeels F."/>
            <person name="Vissers S."/>
            <person name="Wagner G."/>
            <person name="de Wergifosse P."/>
            <person name="Wolfe K.H."/>
            <person name="Zagulski M."/>
            <person name="Zimmermann F.K."/>
            <person name="Mewes H.-W."/>
            <person name="Kleine K."/>
        </authorList>
    </citation>
    <scope>NUCLEOTIDE SEQUENCE [LARGE SCALE GENOMIC DNA]</scope>
    <source>
        <strain>ATCC 204508 / S288c</strain>
    </source>
</reference>
<reference key="3">
    <citation type="journal article" date="2014" name="G3 (Bethesda)">
        <title>The reference genome sequence of Saccharomyces cerevisiae: Then and now.</title>
        <authorList>
            <person name="Engel S.R."/>
            <person name="Dietrich F.S."/>
            <person name="Fisk D.G."/>
            <person name="Binkley G."/>
            <person name="Balakrishnan R."/>
            <person name="Costanzo M.C."/>
            <person name="Dwight S.S."/>
            <person name="Hitz B.C."/>
            <person name="Karra K."/>
            <person name="Nash R.S."/>
            <person name="Weng S."/>
            <person name="Wong E.D."/>
            <person name="Lloyd P."/>
            <person name="Skrzypek M.S."/>
            <person name="Miyasato S.R."/>
            <person name="Simison M."/>
            <person name="Cherry J.M."/>
        </authorList>
    </citation>
    <scope>GENOME REANNOTATION</scope>
    <source>
        <strain>ATCC 204508 / S288c</strain>
    </source>
</reference>
<reference key="4">
    <citation type="journal article" date="1993" name="Biosci. Biotechnol. Biochem.">
        <title>A mutant allele skt5 affecting protoplast regeneration and killer toxin resistance has double mutations in its wild-type structural gene in Saccharomyces cerevisiae.</title>
        <authorList>
            <person name="Kawamoto S."/>
            <person name="Sasaki T."/>
            <person name="Itahashi S."/>
            <person name="Hatsuyama Y."/>
            <person name="Ohno T."/>
        </authorList>
    </citation>
    <scope>NUCLEOTIDE SEQUENCE [GENOMIC DNA] OF 1-678</scope>
    <source>
        <strain>KR13</strain>
    </source>
</reference>
<reference key="5">
    <citation type="journal article" date="1992" name="J. Ferment. Bioeng.">
        <title>Cloning and characterization of SKT5, a Saccharomyces cerevisiae gene that affects protoplast regeneration and resistance to killer toxin of Kluyveromyces lactis.</title>
        <authorList>
            <person name="Kawamoto S."/>
            <person name="Nomura M."/>
            <person name="Ohno T."/>
        </authorList>
    </citation>
    <scope>PRELIMINARY PARTIAL NUCLEOTIDE SEQUENCE</scope>
</reference>
<reference key="6">
    <citation type="journal article" date="1997" name="J. Cell Biol.">
        <title>A septin-based hierarchy of proteins required for localized deposition of chitin in the Saccharomyces cerevisiae cell wall.</title>
        <authorList>
            <person name="DeMarini D.J."/>
            <person name="Adams A.E."/>
            <person name="Fares H."/>
            <person name="De Virgilio C."/>
            <person name="Valle G."/>
            <person name="Chuang J.S."/>
            <person name="Pringle J.R."/>
        </authorList>
    </citation>
    <scope>SUBUNIT</scope>
    <scope>SUBCELLULAR LOCATION</scope>
</reference>
<reference key="7">
    <citation type="journal article" date="1997" name="Yeast">
        <title>Characterization of CHS4 (CAL2), a gene of Saccharomyces cerevisiae involved in chitin biosynthesis and allelic to SKT5 and CSD4.</title>
        <authorList>
            <person name="Trilla J.A."/>
            <person name="Cos T."/>
            <person name="Duran A."/>
            <person name="Roncero C."/>
        </authorList>
    </citation>
    <scope>FUNCTION</scope>
    <scope>INDUCTION</scope>
    <scope>DISRUPTION PHENOTYPE</scope>
</reference>
<reference key="8">
    <citation type="journal article" date="2003" name="Nature">
        <title>Global analysis of protein expression in yeast.</title>
        <authorList>
            <person name="Ghaemmaghami S."/>
            <person name="Huh W.-K."/>
            <person name="Bower K."/>
            <person name="Howson R.W."/>
            <person name="Belle A."/>
            <person name="Dephoure N."/>
            <person name="O'Shea E.K."/>
            <person name="Weissman J.S."/>
        </authorList>
    </citation>
    <scope>LEVEL OF PROTEIN EXPRESSION [LARGE SCALE ANALYSIS]</scope>
</reference>
<reference key="9">
    <citation type="journal article" date="2007" name="Eukaryot. Cell">
        <title>Prenylation of Saccharomyces cerevisiae Chs4p Affects Chitin Synthase III activity and chitin chain length.</title>
        <authorList>
            <person name="Grabinska K.A."/>
            <person name="Magnelli P."/>
            <person name="Robbins P.W."/>
        </authorList>
    </citation>
    <scope>SUBCELLULAR LOCATION</scope>
    <scope>METHYLATION AT CYS-693</scope>
    <scope>ISOPRENYLATION AT CYS-693</scope>
    <scope>MUTAGENESIS OF CYS-693 AND 695-ILE-MET-696</scope>
</reference>
<reference key="10">
    <citation type="journal article" date="2007" name="J. Proteome Res.">
        <title>Large-scale phosphorylation analysis of alpha-factor-arrested Saccharomyces cerevisiae.</title>
        <authorList>
            <person name="Li X."/>
            <person name="Gerber S.A."/>
            <person name="Rudner A.D."/>
            <person name="Beausoleil S.A."/>
            <person name="Haas W."/>
            <person name="Villen J."/>
            <person name="Elias J.E."/>
            <person name="Gygi S.P."/>
        </authorList>
    </citation>
    <scope>PHOSPHORYLATION [LARGE SCALE ANALYSIS] AT SER-561</scope>
    <scope>IDENTIFICATION BY MASS SPECTROMETRY [LARGE SCALE ANALYSIS]</scope>
    <source>
        <strain>ADR376</strain>
    </source>
</reference>
<reference key="11">
    <citation type="journal article" date="2007" name="Proc. Natl. Acad. Sci. U.S.A.">
        <title>Analysis of phosphorylation sites on proteins from Saccharomyces cerevisiae by electron transfer dissociation (ETD) mass spectrometry.</title>
        <authorList>
            <person name="Chi A."/>
            <person name="Huttenhower C."/>
            <person name="Geer L.Y."/>
            <person name="Coon J.J."/>
            <person name="Syka J.E.P."/>
            <person name="Bai D.L."/>
            <person name="Shabanowitz J."/>
            <person name="Burke D.J."/>
            <person name="Troyanskaya O.G."/>
            <person name="Hunt D.F."/>
        </authorList>
    </citation>
    <scope>IDENTIFICATION BY MASS SPECTROMETRY [LARGE SCALE ANALYSIS]</scope>
</reference>
<reference key="12">
    <citation type="journal article" date="2008" name="Mol. Cell. Proteomics">
        <title>A multidimensional chromatography technology for in-depth phosphoproteome analysis.</title>
        <authorList>
            <person name="Albuquerque C.P."/>
            <person name="Smolka M.B."/>
            <person name="Payne S.H."/>
            <person name="Bafna V."/>
            <person name="Eng J."/>
            <person name="Zhou H."/>
        </authorList>
    </citation>
    <scope>PHOSPHORYLATION [LARGE SCALE ANALYSIS] AT SER-148</scope>
    <scope>IDENTIFICATION BY MASS SPECTROMETRY [LARGE SCALE ANALYSIS]</scope>
</reference>
<reference key="13">
    <citation type="journal article" date="2009" name="Science">
        <title>Global analysis of Cdk1 substrate phosphorylation sites provides insights into evolution.</title>
        <authorList>
            <person name="Holt L.J."/>
            <person name="Tuch B.B."/>
            <person name="Villen J."/>
            <person name="Johnson A.D."/>
            <person name="Gygi S.P."/>
            <person name="Morgan D.O."/>
        </authorList>
    </citation>
    <scope>PHOSPHORYLATION [LARGE SCALE ANALYSIS] AT SER-561; SER-563 AND THR-564</scope>
    <scope>IDENTIFICATION BY MASS SPECTROMETRY [LARGE SCALE ANALYSIS]</scope>
</reference>
<proteinExistence type="evidence at protein level"/>
<gene>
    <name evidence="7 10" type="primary">SKT5</name>
    <name evidence="6" type="synonym">CAL2</name>
    <name evidence="6" type="synonym">CHS4</name>
    <name evidence="6" type="synonym">CSD4</name>
    <name type="ordered locus">YBL061C</name>
    <name type="ORF">YBL0506</name>
    <name type="ORF">YBL0519</name>
</gene>
<organism>
    <name type="scientific">Saccharomyces cerevisiae (strain ATCC 204508 / S288c)</name>
    <name type="common">Baker's yeast</name>
    <dbReference type="NCBI Taxonomy" id="559292"/>
    <lineage>
        <taxon>Eukaryota</taxon>
        <taxon>Fungi</taxon>
        <taxon>Dikarya</taxon>
        <taxon>Ascomycota</taxon>
        <taxon>Saccharomycotina</taxon>
        <taxon>Saccharomycetes</taxon>
        <taxon>Saccharomycetales</taxon>
        <taxon>Saccharomycetaceae</taxon>
        <taxon>Saccharomyces</taxon>
    </lineage>
</organism>
<feature type="chain" id="PRO_0000071940" description="Chitin synthase regulator SKT5">
    <location>
        <begin position="1"/>
        <end position="693"/>
    </location>
</feature>
<feature type="propeptide" id="PRO_0000396725" description="Removed in mature form" evidence="9">
    <location>
        <begin position="694"/>
        <end position="696"/>
    </location>
</feature>
<feature type="repeat" description="Sel1-like 1">
    <location>
        <begin position="271"/>
        <end position="306"/>
    </location>
</feature>
<feature type="repeat" description="Sel1-like 2">
    <location>
        <begin position="307"/>
        <end position="342"/>
    </location>
</feature>
<feature type="repeat" description="Sel1-like 3">
    <location>
        <begin position="343"/>
        <end position="382"/>
    </location>
</feature>
<feature type="repeat" description="Sel1-like 4">
    <location>
        <begin position="386"/>
        <end position="423"/>
    </location>
</feature>
<feature type="repeat" description="Sel1-like 5">
    <location>
        <begin position="424"/>
        <end position="460"/>
    </location>
</feature>
<feature type="repeat" description="Sel1-like 6">
    <location>
        <begin position="461"/>
        <end position="498"/>
    </location>
</feature>
<feature type="repeat" description="Sel1-like 7">
    <location>
        <begin position="499"/>
        <end position="534"/>
    </location>
</feature>
<feature type="region of interest" description="Disordered" evidence="1">
    <location>
        <begin position="37"/>
        <end position="67"/>
    </location>
</feature>
<feature type="region of interest" description="Disordered" evidence="1">
    <location>
        <begin position="90"/>
        <end position="145"/>
    </location>
</feature>
<feature type="region of interest" description="Disordered" evidence="1">
    <location>
        <begin position="576"/>
        <end position="696"/>
    </location>
</feature>
<feature type="compositionally biased region" description="Basic and acidic residues" evidence="1">
    <location>
        <begin position="41"/>
        <end position="53"/>
    </location>
</feature>
<feature type="compositionally biased region" description="Low complexity" evidence="1">
    <location>
        <begin position="104"/>
        <end position="126"/>
    </location>
</feature>
<feature type="compositionally biased region" description="Polar residues" evidence="1">
    <location>
        <begin position="129"/>
        <end position="139"/>
    </location>
</feature>
<feature type="compositionally biased region" description="Polar residues" evidence="1">
    <location>
        <begin position="576"/>
        <end position="593"/>
    </location>
</feature>
<feature type="compositionally biased region" description="Polar residues" evidence="1">
    <location>
        <begin position="605"/>
        <end position="634"/>
    </location>
</feature>
<feature type="compositionally biased region" description="Polar residues" evidence="1">
    <location>
        <begin position="651"/>
        <end position="661"/>
    </location>
</feature>
<feature type="compositionally biased region" description="Basic and acidic residues" evidence="1">
    <location>
        <begin position="662"/>
        <end position="675"/>
    </location>
</feature>
<feature type="compositionally biased region" description="Basic residues" evidence="1">
    <location>
        <begin position="680"/>
        <end position="696"/>
    </location>
</feature>
<feature type="modified residue" description="Phosphoserine" evidence="12">
    <location>
        <position position="148"/>
    </location>
</feature>
<feature type="modified residue" description="Phosphoserine" evidence="11 13">
    <location>
        <position position="561"/>
    </location>
</feature>
<feature type="modified residue" description="Phosphoserine" evidence="13">
    <location>
        <position position="563"/>
    </location>
</feature>
<feature type="modified residue" description="Phosphothreonine" evidence="13">
    <location>
        <position position="564"/>
    </location>
</feature>
<feature type="modified residue" description="Cysteine methyl ester" evidence="9">
    <location>
        <position position="693"/>
    </location>
</feature>
<feature type="lipid moiety-binding region" description="S-farnesyl cysteine" evidence="3">
    <location>
        <position position="693"/>
    </location>
</feature>
<feature type="mutagenesis site" description="Abolishes SKT5 prenylation. Decreases chitin synthase CHS3 activity. Decreases chitin chain length. Decreases cellular chitin level. Normal SKT5 localization to cellular membranes. Resistance to Calcofluor White (cell wall stressor)." evidence="3">
    <original>C</original>
    <variation>S</variation>
    <location>
        <position position="693"/>
    </location>
</feature>
<feature type="mutagenesis site" description="Decreases chitin synthase CHS3 activity, resistance to Calcofluor White (cell wall stressor), decreases cellular chitin level." evidence="3">
    <original>IM</original>
    <variation>LL</variation>
    <location>
        <begin position="695"/>
        <end position="696"/>
    </location>
</feature>
<feature type="sequence conflict" description="In Ref. 4; AAC60564." evidence="8" ref="4">
    <original>G</original>
    <variation>E</variation>
    <location>
        <position position="350"/>
    </location>
</feature>
<feature type="sequence conflict" description="In Ref. 4; AAC60564." evidence="8" ref="4">
    <original>Q</original>
    <variation>T</variation>
    <location>
        <position position="643"/>
    </location>
</feature>
<dbReference type="EMBL" id="Z23261">
    <property type="protein sequence ID" value="CAA80786.1"/>
    <property type="molecule type" value="Genomic_DNA"/>
</dbReference>
<dbReference type="EMBL" id="Z35823">
    <property type="protein sequence ID" value="CAA84882.1"/>
    <property type="molecule type" value="Genomic_DNA"/>
</dbReference>
<dbReference type="EMBL" id="S65415">
    <property type="protein sequence ID" value="AAC60564.1"/>
    <property type="status" value="ALT_INIT"/>
    <property type="molecule type" value="Genomic_DNA"/>
</dbReference>
<dbReference type="EMBL" id="BK006936">
    <property type="protein sequence ID" value="DAA07058.1"/>
    <property type="molecule type" value="Genomic_DNA"/>
</dbReference>
<dbReference type="PIR" id="S39827">
    <property type="entry name" value="S39827"/>
</dbReference>
<dbReference type="RefSeq" id="NP_009492.1">
    <property type="nucleotide sequence ID" value="NM_001178301.1"/>
</dbReference>
<dbReference type="SMR" id="P34226"/>
<dbReference type="BioGRID" id="32637">
    <property type="interactions" value="233"/>
</dbReference>
<dbReference type="DIP" id="DIP-2481N"/>
<dbReference type="FunCoup" id="P34226">
    <property type="interactions" value="116"/>
</dbReference>
<dbReference type="IntAct" id="P34226">
    <property type="interactions" value="16"/>
</dbReference>
<dbReference type="MINT" id="P34226"/>
<dbReference type="STRING" id="4932.YBL061C"/>
<dbReference type="iPTMnet" id="P34226"/>
<dbReference type="PaxDb" id="4932-YBL061C"/>
<dbReference type="PeptideAtlas" id="P34226"/>
<dbReference type="EnsemblFungi" id="YBL061C_mRNA">
    <property type="protein sequence ID" value="YBL061C"/>
    <property type="gene ID" value="YBL061C"/>
</dbReference>
<dbReference type="GeneID" id="852218"/>
<dbReference type="KEGG" id="sce:YBL061C"/>
<dbReference type="AGR" id="SGD:S000000157"/>
<dbReference type="SGD" id="S000000157">
    <property type="gene designation" value="SKT5"/>
</dbReference>
<dbReference type="VEuPathDB" id="FungiDB:YBL061C"/>
<dbReference type="eggNOG" id="KOG1550">
    <property type="taxonomic scope" value="Eukaryota"/>
</dbReference>
<dbReference type="GeneTree" id="ENSGT00940000176440"/>
<dbReference type="HOGENOM" id="CLU_000288_126_4_1"/>
<dbReference type="InParanoid" id="P34226"/>
<dbReference type="OMA" id="YEHGKGC"/>
<dbReference type="OrthoDB" id="272077at2759"/>
<dbReference type="BioCyc" id="YEAST:G3O-28959-MONOMER"/>
<dbReference type="BioGRID-ORCS" id="852218">
    <property type="hits" value="0 hits in 10 CRISPR screens"/>
</dbReference>
<dbReference type="PRO" id="PR:P34226"/>
<dbReference type="Proteomes" id="UP000002311">
    <property type="component" value="Chromosome II"/>
</dbReference>
<dbReference type="RNAct" id="P34226">
    <property type="molecule type" value="protein"/>
</dbReference>
<dbReference type="GO" id="GO:0005935">
    <property type="term" value="C:cellular bud neck"/>
    <property type="evidence" value="ECO:0000314"/>
    <property type="project" value="SGD"/>
</dbReference>
<dbReference type="GO" id="GO:0000131">
    <property type="term" value="C:incipient cellular bud site"/>
    <property type="evidence" value="ECO:0000314"/>
    <property type="project" value="SGD"/>
</dbReference>
<dbReference type="GO" id="GO:0016020">
    <property type="term" value="C:membrane"/>
    <property type="evidence" value="ECO:0000314"/>
    <property type="project" value="UniProtKB"/>
</dbReference>
<dbReference type="GO" id="GO:0005886">
    <property type="term" value="C:plasma membrane"/>
    <property type="evidence" value="ECO:0007669"/>
    <property type="project" value="UniProtKB-SubCell"/>
</dbReference>
<dbReference type="GO" id="GO:0008047">
    <property type="term" value="F:enzyme activator activity"/>
    <property type="evidence" value="ECO:0000315"/>
    <property type="project" value="SGD"/>
</dbReference>
<dbReference type="GO" id="GO:0006031">
    <property type="term" value="P:chitin biosynthetic process"/>
    <property type="evidence" value="ECO:0000315"/>
    <property type="project" value="SGD"/>
</dbReference>
<dbReference type="GO" id="GO:0031505">
    <property type="term" value="P:fungal-type cell wall organization"/>
    <property type="evidence" value="ECO:0000318"/>
    <property type="project" value="GO_Central"/>
</dbReference>
<dbReference type="FunFam" id="1.25.40.10:FF:000707">
    <property type="entry name" value="Chitin synthase regulatory factor 3"/>
    <property type="match status" value="1"/>
</dbReference>
<dbReference type="FunFam" id="1.25.40.10:FF:001022">
    <property type="entry name" value="Skt5p"/>
    <property type="match status" value="1"/>
</dbReference>
<dbReference type="Gene3D" id="1.25.40.10">
    <property type="entry name" value="Tetratricopeptide repeat domain"/>
    <property type="match status" value="2"/>
</dbReference>
<dbReference type="InterPro" id="IPR051726">
    <property type="entry name" value="Chitin_Synth_Reg"/>
</dbReference>
<dbReference type="InterPro" id="IPR006597">
    <property type="entry name" value="Sel1-like"/>
</dbReference>
<dbReference type="InterPro" id="IPR011990">
    <property type="entry name" value="TPR-like_helical_dom_sf"/>
</dbReference>
<dbReference type="PANTHER" id="PTHR46430:SF1">
    <property type="entry name" value="CHITIN SYNTHASE REGULATOR SKT5-RELATED"/>
    <property type="match status" value="1"/>
</dbReference>
<dbReference type="PANTHER" id="PTHR46430">
    <property type="entry name" value="PROTEIN SKT5-RELATED"/>
    <property type="match status" value="1"/>
</dbReference>
<dbReference type="Pfam" id="PF08238">
    <property type="entry name" value="Sel1"/>
    <property type="match status" value="7"/>
</dbReference>
<dbReference type="SMART" id="SM00671">
    <property type="entry name" value="SEL1"/>
    <property type="match status" value="7"/>
</dbReference>
<dbReference type="SUPFAM" id="SSF81901">
    <property type="entry name" value="HCP-like"/>
    <property type="match status" value="1"/>
</dbReference>
<keyword id="KW-1003">Cell membrane</keyword>
<keyword id="KW-0449">Lipoprotein</keyword>
<keyword id="KW-0472">Membrane</keyword>
<keyword id="KW-0488">Methylation</keyword>
<keyword id="KW-0597">Phosphoprotein</keyword>
<keyword id="KW-0636">Prenylation</keyword>
<keyword id="KW-1185">Reference proteome</keyword>
<keyword id="KW-0677">Repeat</keyword>
<comment type="function">
    <text evidence="4">Activator of the chitin synthase CHS3 which polymerizes chitin, a structural polymer of the fungal cell wall.</text>
</comment>
<comment type="subunit">
    <text evidence="5">May interact with CHS3 and seems to be an adapter (along with BNI4) to link CHS3 to septins.</text>
</comment>
<comment type="subcellular location">
    <subcellularLocation>
        <location evidence="3">Cell membrane</location>
        <topology evidence="8">Lipid-anchor</topology>
        <orientation evidence="8">Cytoplasmic side</orientation>
    </subcellularLocation>
    <text evidence="3">Farnesylation is not required for cellular membrane localization.</text>
</comment>
<comment type="induction">
    <text evidence="4">Induced by Calcofluor White (PubMed:9234668). Repressed by alpha-factor (PubMed:9234668). Unchanged during sporulation (PubMed:9234668).</text>
</comment>
<comment type="PTM">
    <text evidence="3">Farnesylation is required for chitin synthase CHS3 activity but is not required for SKT5 membrane association.</text>
</comment>
<comment type="disruption phenotype">
    <text evidence="4">Decreases CHS3 chitin synthase activity (PubMed:9234668). Decreases cellular chitin level (PubMed:9234668). Resistance to Calcofluor White (cell wall stressor) (PubMed:9234668). Normal CHS3 RNA level (PubMed:9234668). Decreases conjugation frequency (PubMed:9234668).</text>
</comment>
<comment type="miscellaneous">
    <text evidence="2">Present with 2580 molecules/cell in log phase SD medium.</text>
</comment>
<comment type="similarity">
    <text evidence="8">Belongs to the SKT5 family.</text>
</comment>
<comment type="caution">
    <text evidence="8">It is uncertain whether Met-1 or Met-15 is the initiator.</text>
</comment>
<comment type="sequence caution" evidence="8">
    <conflict type="erroneous initiation">
        <sequence resource="EMBL-CDS" id="AAC60564"/>
    </conflict>
</comment>
<name>SKT5_YEAST</name>
<evidence type="ECO:0000256" key="1">
    <source>
        <dbReference type="SAM" id="MobiDB-lite"/>
    </source>
</evidence>
<evidence type="ECO:0000269" key="2">
    <source>
    </source>
</evidence>
<evidence type="ECO:0000269" key="3">
    <source>
    </source>
</evidence>
<evidence type="ECO:0000269" key="4">
    <source>
    </source>
</evidence>
<evidence type="ECO:0000269" key="5">
    <source>
    </source>
</evidence>
<evidence type="ECO:0000303" key="6">
    <source>
    </source>
</evidence>
<evidence type="ECO:0000303" key="7">
    <source ref="5"/>
</evidence>
<evidence type="ECO:0000305" key="8"/>
<evidence type="ECO:0000305" key="9">
    <source>
    </source>
</evidence>
<evidence type="ECO:0000312" key="10">
    <source>
        <dbReference type="SGD" id="S000000157"/>
    </source>
</evidence>
<evidence type="ECO:0007744" key="11">
    <source>
    </source>
</evidence>
<evidence type="ECO:0007744" key="12">
    <source>
    </source>
</evidence>
<evidence type="ECO:0007744" key="13">
    <source>
    </source>
</evidence>
<accession>P34226</accession>
<accession>D6VPT8</accession>
<accession>Q02215</accession>
<sequence length="696" mass="77066">MASSPQVHPYKKHLMQSQHINFDNRGLQFQNSSLKVGQDFSDNKENRENRDNEDFSTADLPKRSANQPLINEHLRAASVPLLSNDIGNSQEEDFVPVPPPQLHLNNSNNTSLSSLGSTPTNSPSPGALRQTNSSTSLTKEQIKKRTRSVDLSHMYLLNGSSDTQLTATNESVADLSHQMISRYLGGKNNTSLVPRLKTIEMYRQNVKKSKDPEVLFQYAQYMLQTALTIESSNALVQDSDKEGNVSQSDLKLQFLKEAQSYLKKLSIKGYSDAQYLLADGYSSGAFGKIENKEAFVLFQAAAKHGHIESAYRASHCLEEGLGTTRDSRKSVNFLKFAASRNHPSAMYKLGLYSFYGRMGLPTDVNTKLNGVKWLSRAAARANELTAAAPYELAKIYHEGFLDVVIPDEKYAMELYIQAASLGHVPSATLLAQIYETGNDTVGQDTSLSVHYYTQAALKGDSVAMLGLCAWYLLGAEPAFEKDENEAFQWALRAANAGLPKAQFTLGYFYEHGKGCDRNMEYAWKWYEKAAGNEDKRAINKLRSRDGGLASIGKKQHKKNKSISTLNLFSTVDSQTSNVGSNSRVSSKSETFFTGNPKRDREPQGLQINMNSNTNRNGIKTGSDTSIRKSSSSAKGMSREVAEQSMAAKQEVSLSNMGSSNMIRKDFPAVKTESKKPTSLKNKKDKQGKKKKDCVIM</sequence>